<sequence>MGMIGSGLLLIDKPGGWTSHDVVARVRRLAGTRKVGHAGTLDPMATGLLVLGLNSSTRLLTYIVGAEKEYVGTIRLGAATTTDDIEGEILERAEPAALAAVAESSIAEGIAALTGEIEQVPSAVSAVKVDGKRAYARVRAGEEVVLPARAVTVSAFRLLSERREQDAIDLEVRVVCSSGTYIRSLARDLGARLGVGGHLAALRRTRVGGYDVRRAHELATLEPAAALIPATEAASSLFERLRLTEQQATDLAHGKRLHLAGWEGPRGEPVAAIAPSGSLVGLIEFRGKEARTLVNFPADEIA</sequence>
<keyword id="KW-0413">Isomerase</keyword>
<keyword id="KW-1185">Reference proteome</keyword>
<keyword id="KW-0819">tRNA processing</keyword>
<comment type="function">
    <text evidence="1">Responsible for synthesis of pseudouridine from uracil-55 in the psi GC loop of transfer RNAs.</text>
</comment>
<comment type="catalytic activity">
    <reaction evidence="1">
        <text>uridine(55) in tRNA = pseudouridine(55) in tRNA</text>
        <dbReference type="Rhea" id="RHEA:42532"/>
        <dbReference type="Rhea" id="RHEA-COMP:10101"/>
        <dbReference type="Rhea" id="RHEA-COMP:10102"/>
        <dbReference type="ChEBI" id="CHEBI:65314"/>
        <dbReference type="ChEBI" id="CHEBI:65315"/>
        <dbReference type="EC" id="5.4.99.25"/>
    </reaction>
</comment>
<comment type="similarity">
    <text evidence="1">Belongs to the pseudouridine synthase TruB family. Type 1 subfamily.</text>
</comment>
<reference key="1">
    <citation type="journal article" date="2004" name="Mol. Plant Microbe Interact.">
        <title>The genome sequence of the Gram-positive sugarcane pathogen Leifsonia xyli subsp. xyli.</title>
        <authorList>
            <person name="Monteiro-Vitorello C.B."/>
            <person name="Camargo L.E.A."/>
            <person name="Van Sluys M.A."/>
            <person name="Kitajima J.P."/>
            <person name="Truffi D."/>
            <person name="do Amaral A.M."/>
            <person name="Harakava R."/>
            <person name="de Oliveira J.C.F."/>
            <person name="Wood D."/>
            <person name="de Oliveira M.C."/>
            <person name="Miyaki C.Y."/>
            <person name="Takita M.A."/>
            <person name="da Silva A.C.R."/>
            <person name="Furlan L.R."/>
            <person name="Carraro D.M."/>
            <person name="Camarotte G."/>
            <person name="Almeida N.F. Jr."/>
            <person name="Carrer H."/>
            <person name="Coutinho L.L."/>
            <person name="El-Dorry H.A."/>
            <person name="Ferro M.I.T."/>
            <person name="Gagliardi P.R."/>
            <person name="Giglioti E."/>
            <person name="Goldman M.H.S."/>
            <person name="Goldman G.H."/>
            <person name="Kimura E.T."/>
            <person name="Ferro E.S."/>
            <person name="Kuramae E.E."/>
            <person name="Lemos E.G.M."/>
            <person name="Lemos M.V.F."/>
            <person name="Mauro S.M.Z."/>
            <person name="Machado M.A."/>
            <person name="Marino C.L."/>
            <person name="Menck C.F."/>
            <person name="Nunes L.R."/>
            <person name="Oliveira R.C."/>
            <person name="Pereira G.G."/>
            <person name="Siqueira W."/>
            <person name="de Souza A.A."/>
            <person name="Tsai S.M."/>
            <person name="Zanca A.S."/>
            <person name="Simpson A.J.G."/>
            <person name="Brumbley S.M."/>
            <person name="Setubal J.C."/>
        </authorList>
    </citation>
    <scope>NUCLEOTIDE SEQUENCE [LARGE SCALE GENOMIC DNA]</scope>
    <source>
        <strain>CTCB07</strain>
    </source>
</reference>
<protein>
    <recommendedName>
        <fullName evidence="1">tRNA pseudouridine synthase B</fullName>
        <ecNumber evidence="1">5.4.99.25</ecNumber>
    </recommendedName>
    <alternativeName>
        <fullName evidence="1">tRNA pseudouridine(55) synthase</fullName>
        <shortName evidence="1">Psi55 synthase</shortName>
    </alternativeName>
    <alternativeName>
        <fullName evidence="1">tRNA pseudouridylate synthase</fullName>
    </alternativeName>
    <alternativeName>
        <fullName evidence="1">tRNA-uridine isomerase</fullName>
    </alternativeName>
</protein>
<accession>Q6AG41</accession>
<gene>
    <name evidence="1" type="primary">truB</name>
    <name type="ordered locus">Lxx07250</name>
</gene>
<dbReference type="EC" id="5.4.99.25" evidence="1"/>
<dbReference type="EMBL" id="AE016822">
    <property type="protein sequence ID" value="AAT88654.1"/>
    <property type="molecule type" value="Genomic_DNA"/>
</dbReference>
<dbReference type="SMR" id="Q6AG41"/>
<dbReference type="STRING" id="281090.Lxx07250"/>
<dbReference type="KEGG" id="lxx:Lxx07250"/>
<dbReference type="eggNOG" id="COG0130">
    <property type="taxonomic scope" value="Bacteria"/>
</dbReference>
<dbReference type="HOGENOM" id="CLU_032087_0_0_11"/>
<dbReference type="Proteomes" id="UP000001306">
    <property type="component" value="Chromosome"/>
</dbReference>
<dbReference type="GO" id="GO:0003723">
    <property type="term" value="F:RNA binding"/>
    <property type="evidence" value="ECO:0007669"/>
    <property type="project" value="InterPro"/>
</dbReference>
<dbReference type="GO" id="GO:0160148">
    <property type="term" value="F:tRNA pseudouridine(55) synthase activity"/>
    <property type="evidence" value="ECO:0007669"/>
    <property type="project" value="UniProtKB-EC"/>
</dbReference>
<dbReference type="GO" id="GO:1990481">
    <property type="term" value="P:mRNA pseudouridine synthesis"/>
    <property type="evidence" value="ECO:0007669"/>
    <property type="project" value="TreeGrafter"/>
</dbReference>
<dbReference type="GO" id="GO:0031119">
    <property type="term" value="P:tRNA pseudouridine synthesis"/>
    <property type="evidence" value="ECO:0007669"/>
    <property type="project" value="UniProtKB-UniRule"/>
</dbReference>
<dbReference type="CDD" id="cd02573">
    <property type="entry name" value="PseudoU_synth_EcTruB"/>
    <property type="match status" value="1"/>
</dbReference>
<dbReference type="Gene3D" id="3.30.2350.10">
    <property type="entry name" value="Pseudouridine synthase"/>
    <property type="match status" value="1"/>
</dbReference>
<dbReference type="Gene3D" id="2.30.130.10">
    <property type="entry name" value="PUA domain"/>
    <property type="match status" value="1"/>
</dbReference>
<dbReference type="HAMAP" id="MF_01080">
    <property type="entry name" value="TruB_bact"/>
    <property type="match status" value="1"/>
</dbReference>
<dbReference type="InterPro" id="IPR020103">
    <property type="entry name" value="PsdUridine_synth_cat_dom_sf"/>
</dbReference>
<dbReference type="InterPro" id="IPR002501">
    <property type="entry name" value="PsdUridine_synth_N"/>
</dbReference>
<dbReference type="InterPro" id="IPR015947">
    <property type="entry name" value="PUA-like_sf"/>
</dbReference>
<dbReference type="InterPro" id="IPR036974">
    <property type="entry name" value="PUA_sf"/>
</dbReference>
<dbReference type="InterPro" id="IPR015225">
    <property type="entry name" value="tRNA_psdUridine_synth_fam2_C"/>
</dbReference>
<dbReference type="InterPro" id="IPR014780">
    <property type="entry name" value="tRNA_psdUridine_synth_TruB"/>
</dbReference>
<dbReference type="InterPro" id="IPR032819">
    <property type="entry name" value="TruB_C"/>
</dbReference>
<dbReference type="NCBIfam" id="TIGR00431">
    <property type="entry name" value="TruB"/>
    <property type="match status" value="1"/>
</dbReference>
<dbReference type="PANTHER" id="PTHR13767:SF2">
    <property type="entry name" value="PSEUDOURIDYLATE SYNTHASE TRUB1"/>
    <property type="match status" value="1"/>
</dbReference>
<dbReference type="PANTHER" id="PTHR13767">
    <property type="entry name" value="TRNA-PSEUDOURIDINE SYNTHASE"/>
    <property type="match status" value="1"/>
</dbReference>
<dbReference type="Pfam" id="PF09142">
    <property type="entry name" value="TruB_C"/>
    <property type="match status" value="1"/>
</dbReference>
<dbReference type="Pfam" id="PF16198">
    <property type="entry name" value="TruB_C_2"/>
    <property type="match status" value="1"/>
</dbReference>
<dbReference type="Pfam" id="PF01509">
    <property type="entry name" value="TruB_N"/>
    <property type="match status" value="1"/>
</dbReference>
<dbReference type="SUPFAM" id="SSF55120">
    <property type="entry name" value="Pseudouridine synthase"/>
    <property type="match status" value="1"/>
</dbReference>
<dbReference type="SUPFAM" id="SSF88697">
    <property type="entry name" value="PUA domain-like"/>
    <property type="match status" value="1"/>
</dbReference>
<name>TRUB_LEIXX</name>
<organism>
    <name type="scientific">Leifsonia xyli subsp. xyli (strain CTCB07)</name>
    <dbReference type="NCBI Taxonomy" id="281090"/>
    <lineage>
        <taxon>Bacteria</taxon>
        <taxon>Bacillati</taxon>
        <taxon>Actinomycetota</taxon>
        <taxon>Actinomycetes</taxon>
        <taxon>Micrococcales</taxon>
        <taxon>Microbacteriaceae</taxon>
        <taxon>Leifsonia</taxon>
    </lineage>
</organism>
<feature type="chain" id="PRO_0000121854" description="tRNA pseudouridine synthase B">
    <location>
        <begin position="1"/>
        <end position="302"/>
    </location>
</feature>
<feature type="active site" description="Nucleophile" evidence="1">
    <location>
        <position position="42"/>
    </location>
</feature>
<proteinExistence type="inferred from homology"/>
<evidence type="ECO:0000255" key="1">
    <source>
        <dbReference type="HAMAP-Rule" id="MF_01080"/>
    </source>
</evidence>